<organism>
    <name type="scientific">Canis lupus familiaris</name>
    <name type="common">Dog</name>
    <name type="synonym">Canis familiaris</name>
    <dbReference type="NCBI Taxonomy" id="9615"/>
    <lineage>
        <taxon>Eukaryota</taxon>
        <taxon>Metazoa</taxon>
        <taxon>Chordata</taxon>
        <taxon>Craniata</taxon>
        <taxon>Vertebrata</taxon>
        <taxon>Euteleostomi</taxon>
        <taxon>Mammalia</taxon>
        <taxon>Eutheria</taxon>
        <taxon>Laurasiatheria</taxon>
        <taxon>Carnivora</taxon>
        <taxon>Caniformia</taxon>
        <taxon>Canidae</taxon>
        <taxon>Canis</taxon>
    </lineage>
</organism>
<accession>Q5TJE6</accession>
<gene>
    <name type="primary">PFDN6</name>
    <name type="synonym">KE2</name>
</gene>
<name>PFD6_CANLF</name>
<proteinExistence type="inferred from homology"/>
<reference key="1">
    <citation type="journal article" date="2005" name="Genomics">
        <title>Genomic sequence of the class II region of the canine MHC: comparison with the MHC of other mammalian species.</title>
        <authorList>
            <person name="Debenham S.L."/>
            <person name="Hart E.A."/>
            <person name="Ashurst J.L."/>
            <person name="Howe K.L."/>
            <person name="Quail M.A."/>
            <person name="Ollier W.E.R."/>
            <person name="Binns M.M."/>
        </authorList>
    </citation>
    <scope>NUCLEOTIDE SEQUENCE [LARGE SCALE GENOMIC DNA]</scope>
    <source>
        <strain>Doberman pinscher</strain>
    </source>
</reference>
<evidence type="ECO:0000250" key="1">
    <source>
        <dbReference type="UniProtKB" id="O15212"/>
    </source>
</evidence>
<evidence type="ECO:0000250" key="2">
    <source>
        <dbReference type="UniProtKB" id="P52553"/>
    </source>
</evidence>
<evidence type="ECO:0000305" key="3"/>
<feature type="initiator methionine" description="Removed" evidence="1">
    <location>
        <position position="1"/>
    </location>
</feature>
<feature type="chain" id="PRO_0000124849" description="Prefoldin subunit 6">
    <location>
        <begin position="2"/>
        <end position="129"/>
    </location>
</feature>
<feature type="modified residue" description="N-acetylalanine" evidence="1">
    <location>
        <position position="2"/>
    </location>
</feature>
<feature type="modified residue" description="N6-acetyllysine" evidence="1">
    <location>
        <position position="21"/>
    </location>
</feature>
<feature type="modified residue" description="N6-acetyllysine; alternate" evidence="1">
    <location>
        <position position="66"/>
    </location>
</feature>
<feature type="cross-link" description="Glycyl lysine isopeptide (Lys-Gly) (interchain with G-Cter in SUMO1); alternate" evidence="1">
    <location>
        <position position="66"/>
    </location>
</feature>
<feature type="cross-link" description="Glycyl lysine isopeptide (Lys-Gly) (interchain with G-Cter in SUMO2); alternate" evidence="1">
    <location>
        <position position="66"/>
    </location>
</feature>
<dbReference type="EMBL" id="AJ630366">
    <property type="protein sequence ID" value="CAI11442.1"/>
    <property type="molecule type" value="Genomic_DNA"/>
</dbReference>
<dbReference type="RefSeq" id="NP_001041554.1">
    <property type="nucleotide sequence ID" value="NM_001048089.2"/>
</dbReference>
<dbReference type="SMR" id="Q5TJE6"/>
<dbReference type="FunCoup" id="Q5TJE6">
    <property type="interactions" value="2062"/>
</dbReference>
<dbReference type="STRING" id="9615.ENSCAFP00000001363"/>
<dbReference type="PaxDb" id="9612-ENSCAFP00000001363"/>
<dbReference type="Ensembl" id="ENSCAFT00000001479.4">
    <property type="protein sequence ID" value="ENSCAFP00000001363.3"/>
    <property type="gene ID" value="ENSCAFG00000000956.5"/>
</dbReference>
<dbReference type="Ensembl" id="ENSCAFT00030024194.1">
    <property type="protein sequence ID" value="ENSCAFP00030021099.1"/>
    <property type="gene ID" value="ENSCAFG00030013071.1"/>
</dbReference>
<dbReference type="Ensembl" id="ENSCAFT00040039083.1">
    <property type="protein sequence ID" value="ENSCAFP00040034080.1"/>
    <property type="gene ID" value="ENSCAFG00040021078.1"/>
</dbReference>
<dbReference type="Ensembl" id="ENSCAFT00845037435.1">
    <property type="protein sequence ID" value="ENSCAFP00845029325.1"/>
    <property type="gene ID" value="ENSCAFG00845021180.1"/>
</dbReference>
<dbReference type="GeneID" id="474872"/>
<dbReference type="KEGG" id="cfa:474872"/>
<dbReference type="KEGG" id="cfa:610181"/>
<dbReference type="CTD" id="10471"/>
<dbReference type="VEuPathDB" id="HostDB:ENSCAFG00845021180"/>
<dbReference type="VGNC" id="VGNC:44441">
    <property type="gene designation" value="PFDN6"/>
</dbReference>
<dbReference type="eggNOG" id="KOG3478">
    <property type="taxonomic scope" value="Eukaryota"/>
</dbReference>
<dbReference type="GeneTree" id="ENSGT00390000010512"/>
<dbReference type="HOGENOM" id="CLU_125172_0_1_1"/>
<dbReference type="InParanoid" id="Q5TJE6"/>
<dbReference type="OMA" id="VQTEFAQ"/>
<dbReference type="OrthoDB" id="248120at2759"/>
<dbReference type="TreeFam" id="TF315166"/>
<dbReference type="Proteomes" id="UP000002254">
    <property type="component" value="Chromosome 12"/>
</dbReference>
<dbReference type="Proteomes" id="UP000694429">
    <property type="component" value="Chromosome 12"/>
</dbReference>
<dbReference type="Proteomes" id="UP000694542">
    <property type="component" value="Chromosome 12"/>
</dbReference>
<dbReference type="Proteomes" id="UP000805418">
    <property type="component" value="Chromosome 12"/>
</dbReference>
<dbReference type="Bgee" id="ENSCAFG00000000956">
    <property type="expression patterns" value="Expressed in renal medulla and 49 other cell types or tissues"/>
</dbReference>
<dbReference type="GO" id="GO:0005737">
    <property type="term" value="C:cytoplasm"/>
    <property type="evidence" value="ECO:0000318"/>
    <property type="project" value="GO_Central"/>
</dbReference>
<dbReference type="GO" id="GO:0016272">
    <property type="term" value="C:prefoldin complex"/>
    <property type="evidence" value="ECO:0000318"/>
    <property type="project" value="GO_Central"/>
</dbReference>
<dbReference type="GO" id="GO:0051087">
    <property type="term" value="F:protein-folding chaperone binding"/>
    <property type="evidence" value="ECO:0000318"/>
    <property type="project" value="GO_Central"/>
</dbReference>
<dbReference type="GO" id="GO:0051082">
    <property type="term" value="F:unfolded protein binding"/>
    <property type="evidence" value="ECO:0007669"/>
    <property type="project" value="InterPro"/>
</dbReference>
<dbReference type="GO" id="GO:0051131">
    <property type="term" value="P:chaperone-mediated protein complex assembly"/>
    <property type="evidence" value="ECO:0000318"/>
    <property type="project" value="GO_Central"/>
</dbReference>
<dbReference type="GO" id="GO:0006457">
    <property type="term" value="P:protein folding"/>
    <property type="evidence" value="ECO:0000318"/>
    <property type="project" value="GO_Central"/>
</dbReference>
<dbReference type="CDD" id="cd23161">
    <property type="entry name" value="Prefoldin_6"/>
    <property type="match status" value="1"/>
</dbReference>
<dbReference type="FunFam" id="1.10.287.370:FF:000003">
    <property type="entry name" value="Prefoldin subunit 6"/>
    <property type="match status" value="1"/>
</dbReference>
<dbReference type="Gene3D" id="1.10.287.370">
    <property type="match status" value="1"/>
</dbReference>
<dbReference type="InterPro" id="IPR002777">
    <property type="entry name" value="PFD_beta-like"/>
</dbReference>
<dbReference type="InterPro" id="IPR009053">
    <property type="entry name" value="Prefoldin"/>
</dbReference>
<dbReference type="PANTHER" id="PTHR21431">
    <property type="entry name" value="PREFOLDIN SUBUNIT 6"/>
    <property type="match status" value="1"/>
</dbReference>
<dbReference type="PANTHER" id="PTHR21431:SF0">
    <property type="entry name" value="PREFOLDIN SUBUNIT 6"/>
    <property type="match status" value="1"/>
</dbReference>
<dbReference type="Pfam" id="PF01920">
    <property type="entry name" value="Prefoldin_2"/>
    <property type="match status" value="1"/>
</dbReference>
<dbReference type="SUPFAM" id="SSF46579">
    <property type="entry name" value="Prefoldin"/>
    <property type="match status" value="1"/>
</dbReference>
<comment type="function">
    <text evidence="1">Binds specifically to cytosolic chaperonin (c-CPN) and transfers target proteins to it. Binds to nascent polypeptide chain and promotes folding in an environment in which there are many competing pathways for nonnative proteins.</text>
</comment>
<comment type="subunit">
    <text evidence="1 2">Heterohexamer of two PFD-alpha type and four PFD-beta type subunits (By similarity). Component of the PAQosome complex which is responsible for the biogenesis of several protein complexes and which consists of R2TP complex members RUVBL1, RUVBL2, RPAP3 and PIH1D1, URI complex members PFDN2, PFDN6, PDRG1, UXT and URI1 as well as ASDURF, POLR2E and DNAAF10/WDR92 (By similarity).</text>
</comment>
<comment type="similarity">
    <text evidence="3">Belongs to the prefoldin subunit beta family.</text>
</comment>
<protein>
    <recommendedName>
        <fullName>Prefoldin subunit 6</fullName>
    </recommendedName>
    <alternativeName>
        <fullName>Protein Ke2</fullName>
    </alternativeName>
</protein>
<keyword id="KW-0007">Acetylation</keyword>
<keyword id="KW-0143">Chaperone</keyword>
<keyword id="KW-1017">Isopeptide bond</keyword>
<keyword id="KW-1185">Reference proteome</keyword>
<keyword id="KW-0832">Ubl conjugation</keyword>
<sequence>MAELIQKKLQGEVEKYQQLQKDLSKSMSGRQKLEAQLTENNIVKEELALLDGSNVVFKLLGPVLVKQELGEARATVGKRLDYITAEIKRYESQLRDLERQSEQQRETLAQLQQEFQRAQAAKAGASGKA</sequence>